<feature type="chain" id="PRO_0000125925" description="Heat shock protein beta-1">
    <location>
        <begin position="1"/>
        <end position="209"/>
    </location>
</feature>
<feature type="domain" description="sHSP" evidence="5">
    <location>
        <begin position="80"/>
        <end position="188"/>
    </location>
</feature>
<feature type="region of interest" description="Interaction with TGFB1I1" evidence="1">
    <location>
        <begin position="74"/>
        <end position="209"/>
    </location>
</feature>
<feature type="modified residue" description="Omega-N-methylarginine" evidence="2">
    <location>
        <position position="12"/>
    </location>
</feature>
<feature type="modified residue" description="Phosphoserine" evidence="4">
    <location>
        <position position="13"/>
    </location>
</feature>
<feature type="modified residue" description="Phosphoserine; by MAPKAPK2 and MAPKAPK3" evidence="3">
    <location>
        <position position="15"/>
    </location>
</feature>
<feature type="modified residue" description="Phosphoserine" evidence="4">
    <location>
        <position position="27"/>
    </location>
</feature>
<feature type="modified residue" description="Phosphoserine; by MAPKAPK2, MAPKAPK3 and MAPKAPK5" evidence="2">
    <location>
        <position position="82"/>
    </location>
</feature>
<feature type="modified residue" description="Phosphoserine; by MAPKAPK2, MAPKAPK3 and MAPKAPK5" evidence="3">
    <location>
        <position position="86"/>
    </location>
</feature>
<feature type="modified residue" description="Phosphoserine" evidence="2">
    <location>
        <position position="87"/>
    </location>
</feature>
<feature type="modified residue" description="Phosphoserine" evidence="2">
    <location>
        <position position="90"/>
    </location>
</feature>
<feature type="modified residue" description="Phosphoserine" evidence="2">
    <location>
        <position position="102"/>
    </location>
</feature>
<feature type="modified residue" description="N6-acetyllysine" evidence="2">
    <location>
        <position position="127"/>
    </location>
</feature>
<feature type="modified residue" description="Phosphothreonine" evidence="2">
    <location>
        <position position="178"/>
    </location>
</feature>
<feature type="modified residue" description="Phosphoserine" evidence="2">
    <location>
        <position position="180"/>
    </location>
</feature>
<feature type="modified residue" description="Phosphoserine" evidence="2">
    <location>
        <position position="203"/>
    </location>
</feature>
<sequence length="209" mass="22939">MTERRVPFSLLRSPSWDPFRDWYPAHSRLFDQAFGLPRLPEEWAQWFGHSGWPGYVRPIPPAVEGPAAAAAAAAPAYSRALSRQLSSGVSEIRQTADRWRVSLDVNHFAPEELTVKTKDGVVEITGKHEERQDEHGYISRRLTPKYTLPPGVDPTLVSSSLSPEGTLTVEAPMPKPATQSAEITIPVTFEARAQIGGPEAGKSEQSGAK</sequence>
<organism>
    <name type="scientific">Canis lupus familiaris</name>
    <name type="common">Dog</name>
    <name type="synonym">Canis familiaris</name>
    <dbReference type="NCBI Taxonomy" id="9615"/>
    <lineage>
        <taxon>Eukaryota</taxon>
        <taxon>Metazoa</taxon>
        <taxon>Chordata</taxon>
        <taxon>Craniata</taxon>
        <taxon>Vertebrata</taxon>
        <taxon>Euteleostomi</taxon>
        <taxon>Mammalia</taxon>
        <taxon>Eutheria</taxon>
        <taxon>Laurasiatheria</taxon>
        <taxon>Carnivora</taxon>
        <taxon>Caniformia</taxon>
        <taxon>Canidae</taxon>
        <taxon>Canis</taxon>
    </lineage>
</organism>
<name>HSPB1_CANLF</name>
<comment type="function">
    <text evidence="2">Small heat shock protein which functions as a molecular chaperone probably maintaining denatured proteins in a folding-competent state. Plays a role in stress resistance and actin organization. Through its molecular chaperone activity may regulate numerous biological processes including the phosphorylation and the axonal transport of neurofilament proteins.</text>
</comment>
<comment type="subunit">
    <text evidence="2">Homooligomer. Homodimer; becomes monomeric upon activation. Heterooligomer; with HSPB6. Associates with alpha- and beta-tubulin. Interacts with TGFB1I1. Interacts with CRYAB. Interacts with HSPB8. Interacts with HSPBAP1.</text>
</comment>
<comment type="subcellular location">
    <subcellularLocation>
        <location evidence="2">Cytoplasm</location>
    </subcellularLocation>
    <subcellularLocation>
        <location evidence="2">Nucleus</location>
    </subcellularLocation>
    <subcellularLocation>
        <location evidence="2">Cytoplasm</location>
        <location evidence="2">Cytoskeleton</location>
        <location evidence="2">Spindle</location>
    </subcellularLocation>
    <text evidence="2">Cytoplasmic in interphase cells. Colocalizes with mitotic spindles in mitotic cells. Translocates to the nucleus during heat shock and resides in sub-nuclear structures known as SC35 speckles or nuclear splicing speckles.</text>
</comment>
<comment type="PTM">
    <text evidence="2">Phosphorylated upon exposure to protein kinase C activators and heat shock. Phosphorylation by MAPKAPK2 and MAPKAPK3 in response to stress dissociates HSPB1 from large small heat-shock protein (sHsps) oligomers and impairs its chaperone activity and ability to protect against oxidative stress effectively. Phosphorylation by MAPKAPK5 in response to PKA stimulation induces F-actin rearrangement.</text>
</comment>
<comment type="similarity">
    <text evidence="5">Belongs to the small heat shock protein (HSP20) family.</text>
</comment>
<proteinExistence type="evidence at transcript level"/>
<gene>
    <name type="primary">HSPB1</name>
    <name type="synonym">HSP27</name>
</gene>
<dbReference type="EMBL" id="U19368">
    <property type="protein sequence ID" value="AAA87172.1"/>
    <property type="molecule type" value="mRNA"/>
</dbReference>
<dbReference type="PIR" id="JC4244">
    <property type="entry name" value="JC4244"/>
</dbReference>
<dbReference type="SMR" id="P42929"/>
<dbReference type="FunCoup" id="P42929">
    <property type="interactions" value="74"/>
</dbReference>
<dbReference type="STRING" id="9615.ENSCAFP00000019945"/>
<dbReference type="iPTMnet" id="P42929"/>
<dbReference type="PaxDb" id="9612-ENSCAFP00000019945"/>
<dbReference type="eggNOG" id="KOG3591">
    <property type="taxonomic scope" value="Eukaryota"/>
</dbReference>
<dbReference type="InParanoid" id="P42929"/>
<dbReference type="OrthoDB" id="10060792at2759"/>
<dbReference type="Proteomes" id="UP000002254">
    <property type="component" value="Unplaced"/>
</dbReference>
<dbReference type="Proteomes" id="UP000694429">
    <property type="component" value="Unplaced"/>
</dbReference>
<dbReference type="Proteomes" id="UP000694542">
    <property type="component" value="Unplaced"/>
</dbReference>
<dbReference type="Proteomes" id="UP000805418">
    <property type="component" value="Unplaced"/>
</dbReference>
<dbReference type="GO" id="GO:1904115">
    <property type="term" value="C:axon cytoplasm"/>
    <property type="evidence" value="ECO:0007669"/>
    <property type="project" value="GOC"/>
</dbReference>
<dbReference type="GO" id="GO:0005737">
    <property type="term" value="C:cytoplasm"/>
    <property type="evidence" value="ECO:0000250"/>
    <property type="project" value="UniProtKB"/>
</dbReference>
<dbReference type="GO" id="GO:0005634">
    <property type="term" value="C:nucleus"/>
    <property type="evidence" value="ECO:0000250"/>
    <property type="project" value="UniProtKB"/>
</dbReference>
<dbReference type="GO" id="GO:0005819">
    <property type="term" value="C:spindle"/>
    <property type="evidence" value="ECO:0007669"/>
    <property type="project" value="UniProtKB-SubCell"/>
</dbReference>
<dbReference type="GO" id="GO:0042802">
    <property type="term" value="F:identical protein binding"/>
    <property type="evidence" value="ECO:0000250"/>
    <property type="project" value="UniProtKB"/>
</dbReference>
<dbReference type="GO" id="GO:0044183">
    <property type="term" value="F:protein folding chaperone"/>
    <property type="evidence" value="ECO:0000250"/>
    <property type="project" value="UniProtKB"/>
</dbReference>
<dbReference type="GO" id="GO:0042803">
    <property type="term" value="F:protein homodimerization activity"/>
    <property type="evidence" value="ECO:0000250"/>
    <property type="project" value="UniProtKB"/>
</dbReference>
<dbReference type="GO" id="GO:0051082">
    <property type="term" value="F:unfolded protein binding"/>
    <property type="evidence" value="ECO:0000318"/>
    <property type="project" value="GO_Central"/>
</dbReference>
<dbReference type="GO" id="GO:0099641">
    <property type="term" value="P:anterograde axonal protein transport"/>
    <property type="evidence" value="ECO:0000250"/>
    <property type="project" value="UniProtKB"/>
</dbReference>
<dbReference type="GO" id="GO:0061077">
    <property type="term" value="P:chaperone-mediated protein folding"/>
    <property type="evidence" value="ECO:0000250"/>
    <property type="project" value="UniProtKB"/>
</dbReference>
<dbReference type="GO" id="GO:0043066">
    <property type="term" value="P:negative regulation of apoptotic process"/>
    <property type="evidence" value="ECO:0000318"/>
    <property type="project" value="GO_Central"/>
</dbReference>
<dbReference type="GO" id="GO:0042026">
    <property type="term" value="P:protein refolding"/>
    <property type="evidence" value="ECO:0000318"/>
    <property type="project" value="GO_Central"/>
</dbReference>
<dbReference type="GO" id="GO:0001932">
    <property type="term" value="P:regulation of protein phosphorylation"/>
    <property type="evidence" value="ECO:0000250"/>
    <property type="project" value="UniProtKB"/>
</dbReference>
<dbReference type="GO" id="GO:0009408">
    <property type="term" value="P:response to heat"/>
    <property type="evidence" value="ECO:0000318"/>
    <property type="project" value="GO_Central"/>
</dbReference>
<dbReference type="CDD" id="cd06475">
    <property type="entry name" value="ACD_HspB1_like"/>
    <property type="match status" value="1"/>
</dbReference>
<dbReference type="FunFam" id="2.60.40.790:FF:000024">
    <property type="entry name" value="heat shock protein beta-1"/>
    <property type="match status" value="1"/>
</dbReference>
<dbReference type="Gene3D" id="2.60.40.790">
    <property type="match status" value="1"/>
</dbReference>
<dbReference type="InterPro" id="IPR002068">
    <property type="entry name" value="A-crystallin/Hsp20_dom"/>
</dbReference>
<dbReference type="InterPro" id="IPR037876">
    <property type="entry name" value="ACD_HspB1"/>
</dbReference>
<dbReference type="InterPro" id="IPR001436">
    <property type="entry name" value="Alpha-crystallin/sHSP_animal"/>
</dbReference>
<dbReference type="InterPro" id="IPR008978">
    <property type="entry name" value="HSP20-like_chaperone"/>
</dbReference>
<dbReference type="PANTHER" id="PTHR45640:SF7">
    <property type="entry name" value="HEAT SHOCK PROTEIN BETA-1"/>
    <property type="match status" value="1"/>
</dbReference>
<dbReference type="PANTHER" id="PTHR45640">
    <property type="entry name" value="HEAT SHOCK PROTEIN HSP-12.2-RELATED"/>
    <property type="match status" value="1"/>
</dbReference>
<dbReference type="Pfam" id="PF00011">
    <property type="entry name" value="HSP20"/>
    <property type="match status" value="1"/>
</dbReference>
<dbReference type="PRINTS" id="PR00299">
    <property type="entry name" value="ACRYSTALLIN"/>
</dbReference>
<dbReference type="SUPFAM" id="SSF49764">
    <property type="entry name" value="HSP20-like chaperones"/>
    <property type="match status" value="1"/>
</dbReference>
<dbReference type="PROSITE" id="PS01031">
    <property type="entry name" value="SHSP"/>
    <property type="match status" value="1"/>
</dbReference>
<protein>
    <recommendedName>
        <fullName>Heat shock protein beta-1</fullName>
        <shortName>HspB1</shortName>
    </recommendedName>
    <alternativeName>
        <fullName>Heat shock 27 kDa protein</fullName>
        <shortName>HSP 27</shortName>
    </alternativeName>
</protein>
<accession>P42929</accession>
<keyword id="KW-0007">Acetylation</keyword>
<keyword id="KW-0143">Chaperone</keyword>
<keyword id="KW-0963">Cytoplasm</keyword>
<keyword id="KW-0206">Cytoskeleton</keyword>
<keyword id="KW-0488">Methylation</keyword>
<keyword id="KW-0539">Nucleus</keyword>
<keyword id="KW-0597">Phosphoprotein</keyword>
<keyword id="KW-1185">Reference proteome</keyword>
<keyword id="KW-0346">Stress response</keyword>
<evidence type="ECO:0000250" key="1"/>
<evidence type="ECO:0000250" key="2">
    <source>
        <dbReference type="UniProtKB" id="P04792"/>
    </source>
</evidence>
<evidence type="ECO:0000250" key="3">
    <source>
        <dbReference type="UniProtKB" id="P14602"/>
    </source>
</evidence>
<evidence type="ECO:0000250" key="4">
    <source>
        <dbReference type="UniProtKB" id="P42930"/>
    </source>
</evidence>
<evidence type="ECO:0000255" key="5">
    <source>
        <dbReference type="PROSITE-ProRule" id="PRU00285"/>
    </source>
</evidence>
<reference key="1">
    <citation type="journal article" date="1995" name="Gene">
        <title>Cloning and sequencing of a cDNA encoding the canine HSP27 protein.</title>
        <authorList>
            <person name="Larsen J.K."/>
            <person name="Gerthoffer W.T."/>
            <person name="Hickey E."/>
            <person name="Weber L.A."/>
        </authorList>
    </citation>
    <scope>NUCLEOTIDE SEQUENCE [MRNA]</scope>
    <source>
        <tissue>Colon smooth muscle</tissue>
    </source>
</reference>